<feature type="chain" id="PRO_0000047591" description="Zinc finger protein 442">
    <location>
        <begin position="1"/>
        <end position="627"/>
    </location>
</feature>
<feature type="domain" description="KRAB" evidence="2">
    <location>
        <begin position="29"/>
        <end position="115"/>
    </location>
</feature>
<feature type="zinc finger region" description="C2H2-type 1; degenerate" evidence="1">
    <location>
        <begin position="181"/>
        <end position="203"/>
    </location>
</feature>
<feature type="zinc finger region" description="C2H2-type 2" evidence="1">
    <location>
        <begin position="209"/>
        <end position="231"/>
    </location>
</feature>
<feature type="zinc finger region" description="C2H2-type 3" evidence="1">
    <location>
        <begin position="237"/>
        <end position="259"/>
    </location>
</feature>
<feature type="zinc finger region" description="C2H2-type 4" evidence="1">
    <location>
        <begin position="265"/>
        <end position="287"/>
    </location>
</feature>
<feature type="zinc finger region" description="C2H2-type 5" evidence="1">
    <location>
        <begin position="293"/>
        <end position="315"/>
    </location>
</feature>
<feature type="zinc finger region" description="C2H2-type 6" evidence="1">
    <location>
        <begin position="321"/>
        <end position="343"/>
    </location>
</feature>
<feature type="zinc finger region" description="C2H2-type 7" evidence="1">
    <location>
        <begin position="349"/>
        <end position="371"/>
    </location>
</feature>
<feature type="zinc finger region" description="C2H2-type 8" evidence="1">
    <location>
        <begin position="377"/>
        <end position="399"/>
    </location>
</feature>
<feature type="zinc finger region" description="C2H2-type 9" evidence="1">
    <location>
        <begin position="405"/>
        <end position="427"/>
    </location>
</feature>
<feature type="zinc finger region" description="C2H2-type 10" evidence="1">
    <location>
        <begin position="433"/>
        <end position="455"/>
    </location>
</feature>
<feature type="zinc finger region" description="C2H2-type 11; atypical" evidence="1">
    <location>
        <begin position="461"/>
        <end position="482"/>
    </location>
</feature>
<feature type="zinc finger region" description="C2H2-type 12" evidence="1">
    <location>
        <begin position="488"/>
        <end position="510"/>
    </location>
</feature>
<feature type="zinc finger region" description="C2H2-type 13" evidence="1">
    <location>
        <begin position="516"/>
        <end position="538"/>
    </location>
</feature>
<feature type="zinc finger region" description="C2H2-type 14" evidence="1">
    <location>
        <begin position="544"/>
        <end position="566"/>
    </location>
</feature>
<feature type="zinc finger region" description="C2H2-type 15" evidence="1">
    <location>
        <begin position="572"/>
        <end position="594"/>
    </location>
</feature>
<feature type="zinc finger region" description="C2H2-type 16" evidence="1">
    <location>
        <begin position="600"/>
        <end position="622"/>
    </location>
</feature>
<feature type="splice variant" id="VSP_055953" description="In isoform 2." evidence="5">
    <location>
        <begin position="1"/>
        <end position="69"/>
    </location>
</feature>
<feature type="sequence variant" id="VAR_052830" description="In dbSNP:rs10423273.">
    <original>I</original>
    <variation>V</variation>
    <location>
        <position position="93"/>
    </location>
</feature>
<feature type="sequence variant" id="VAR_024217" description="In dbSNP:rs10415207.">
    <original>P</original>
    <variation>T</variation>
    <location>
        <position position="110"/>
    </location>
</feature>
<feature type="sequence variant" id="VAR_035581" description="In a colorectal cancer sample; somatic mutation; dbSNP:rs10414971." evidence="3">
    <original>P</original>
    <variation>S</variation>
    <location>
        <position position="152"/>
    </location>
</feature>
<feature type="sequence variant" id="VAR_035582" description="In a colorectal cancer sample; somatic mutation; dbSNP:rs757755988." evidence="3">
    <original>C</original>
    <variation>S</variation>
    <location>
        <position position="243"/>
    </location>
</feature>
<feature type="sequence variant" id="VAR_052831" description="In dbSNP:rs11085808.">
    <original>G</original>
    <variation>R</variation>
    <location>
        <position position="422"/>
    </location>
</feature>
<feature type="sequence variant" id="VAR_024218" description="In dbSNP:rs10500210.">
    <original>R</original>
    <variation>C</variation>
    <location>
        <position position="443"/>
    </location>
</feature>
<feature type="sequence variant" id="VAR_064763" description="Found in a renal cell carcinoma sample; somatic mutation." evidence="4">
    <original>H</original>
    <variation>L</variation>
    <location>
        <position position="590"/>
    </location>
</feature>
<dbReference type="EMBL" id="AK024418">
    <property type="protein sequence ID" value="BAB14916.1"/>
    <property type="molecule type" value="mRNA"/>
</dbReference>
<dbReference type="EMBL" id="AK295923">
    <property type="protein sequence ID" value="BAG58710.1"/>
    <property type="molecule type" value="mRNA"/>
</dbReference>
<dbReference type="EMBL" id="AC008758">
    <property type="status" value="NOT_ANNOTATED_CDS"/>
    <property type="molecule type" value="Genomic_DNA"/>
</dbReference>
<dbReference type="CCDS" id="CCDS12271.1">
    <molecule id="Q9H7R0-1"/>
</dbReference>
<dbReference type="CCDS" id="CCDS86707.1">
    <molecule id="Q9H7R0-2"/>
</dbReference>
<dbReference type="RefSeq" id="NP_001350703.1">
    <molecule id="Q9H7R0-2"/>
    <property type="nucleotide sequence ID" value="NM_001363774.2"/>
</dbReference>
<dbReference type="RefSeq" id="NP_110451.1">
    <molecule id="Q9H7R0-1"/>
    <property type="nucleotide sequence ID" value="NM_030824.3"/>
</dbReference>
<dbReference type="RefSeq" id="XP_016882807.1">
    <property type="nucleotide sequence ID" value="XM_017027318.1"/>
</dbReference>
<dbReference type="SMR" id="Q9H7R0"/>
<dbReference type="BioGRID" id="123040">
    <property type="interactions" value="2"/>
</dbReference>
<dbReference type="FunCoup" id="Q9H7R0">
    <property type="interactions" value="416"/>
</dbReference>
<dbReference type="IntAct" id="Q9H7R0">
    <property type="interactions" value="4"/>
</dbReference>
<dbReference type="STRING" id="9606.ENSP00000242804"/>
<dbReference type="iPTMnet" id="Q9H7R0"/>
<dbReference type="PhosphoSitePlus" id="Q9H7R0"/>
<dbReference type="BioMuta" id="ZNF442"/>
<dbReference type="DMDM" id="30580638"/>
<dbReference type="jPOST" id="Q9H7R0"/>
<dbReference type="MassIVE" id="Q9H7R0"/>
<dbReference type="PaxDb" id="9606-ENSP00000242804"/>
<dbReference type="PeptideAtlas" id="Q9H7R0"/>
<dbReference type="Antibodypedia" id="26037">
    <property type="antibodies" value="31 antibodies from 13 providers"/>
</dbReference>
<dbReference type="DNASU" id="79973"/>
<dbReference type="Ensembl" id="ENST00000242804.9">
    <molecule id="Q9H7R0-1"/>
    <property type="protein sequence ID" value="ENSP00000242804.4"/>
    <property type="gene ID" value="ENSG00000198342.10"/>
</dbReference>
<dbReference type="Ensembl" id="ENST00000438182.5">
    <molecule id="Q9H7R0-2"/>
    <property type="protein sequence ID" value="ENSP00000388634.1"/>
    <property type="gene ID" value="ENSG00000198342.10"/>
</dbReference>
<dbReference type="Ensembl" id="ENST00000545749.2">
    <molecule id="Q9H7R0-1"/>
    <property type="protein sequence ID" value="ENSP00000440162.2"/>
    <property type="gene ID" value="ENSG00000198342.10"/>
</dbReference>
<dbReference type="GeneID" id="79973"/>
<dbReference type="KEGG" id="hsa:79973"/>
<dbReference type="MANE-Select" id="ENST00000242804.9">
    <property type="protein sequence ID" value="ENSP00000242804.4"/>
    <property type="RefSeq nucleotide sequence ID" value="NM_030824.3"/>
    <property type="RefSeq protein sequence ID" value="NP_110451.1"/>
</dbReference>
<dbReference type="UCSC" id="uc002mtr.2">
    <molecule id="Q9H7R0-1"/>
    <property type="organism name" value="human"/>
</dbReference>
<dbReference type="AGR" id="HGNC:20877"/>
<dbReference type="CTD" id="79973"/>
<dbReference type="GeneCards" id="ZNF442"/>
<dbReference type="HGNC" id="HGNC:20877">
    <property type="gene designation" value="ZNF442"/>
</dbReference>
<dbReference type="HPA" id="ENSG00000198342">
    <property type="expression patterns" value="Low tissue specificity"/>
</dbReference>
<dbReference type="neXtProt" id="NX_Q9H7R0"/>
<dbReference type="OpenTargets" id="ENSG00000198342"/>
<dbReference type="PharmGKB" id="PA134983440"/>
<dbReference type="VEuPathDB" id="HostDB:ENSG00000198342"/>
<dbReference type="eggNOG" id="KOG1721">
    <property type="taxonomic scope" value="Eukaryota"/>
</dbReference>
<dbReference type="GeneTree" id="ENSGT00950000182755"/>
<dbReference type="HOGENOM" id="CLU_002678_44_5_1"/>
<dbReference type="InParanoid" id="Q9H7R0"/>
<dbReference type="OMA" id="MHACKEC"/>
<dbReference type="OrthoDB" id="6077919at2759"/>
<dbReference type="PAN-GO" id="Q9H7R0">
    <property type="GO annotations" value="4 GO annotations based on evolutionary models"/>
</dbReference>
<dbReference type="PhylomeDB" id="Q9H7R0"/>
<dbReference type="TreeFam" id="TF338854"/>
<dbReference type="PathwayCommons" id="Q9H7R0"/>
<dbReference type="Reactome" id="R-HSA-212436">
    <property type="pathway name" value="Generic Transcription Pathway"/>
</dbReference>
<dbReference type="SignaLink" id="Q9H7R0"/>
<dbReference type="BioGRID-ORCS" id="79973">
    <property type="hits" value="250 hits in 1136 CRISPR screens"/>
</dbReference>
<dbReference type="ChiTaRS" id="ZNF442">
    <property type="organism name" value="human"/>
</dbReference>
<dbReference type="GenomeRNAi" id="79973"/>
<dbReference type="Pharos" id="Q9H7R0">
    <property type="development level" value="Tdark"/>
</dbReference>
<dbReference type="PRO" id="PR:Q9H7R0"/>
<dbReference type="Proteomes" id="UP000005640">
    <property type="component" value="Chromosome 19"/>
</dbReference>
<dbReference type="RNAct" id="Q9H7R0">
    <property type="molecule type" value="protein"/>
</dbReference>
<dbReference type="Bgee" id="ENSG00000198342">
    <property type="expression patterns" value="Expressed in primordial germ cell in gonad and 107 other cell types or tissues"/>
</dbReference>
<dbReference type="ExpressionAtlas" id="Q9H7R0">
    <property type="expression patterns" value="baseline and differential"/>
</dbReference>
<dbReference type="GO" id="GO:0005634">
    <property type="term" value="C:nucleus"/>
    <property type="evidence" value="ECO:0000318"/>
    <property type="project" value="GO_Central"/>
</dbReference>
<dbReference type="GO" id="GO:0000981">
    <property type="term" value="F:DNA-binding transcription factor activity, RNA polymerase II-specific"/>
    <property type="evidence" value="ECO:0000318"/>
    <property type="project" value="GO_Central"/>
</dbReference>
<dbReference type="GO" id="GO:0000977">
    <property type="term" value="F:RNA polymerase II transcription regulatory region sequence-specific DNA binding"/>
    <property type="evidence" value="ECO:0000318"/>
    <property type="project" value="GO_Central"/>
</dbReference>
<dbReference type="GO" id="GO:0008270">
    <property type="term" value="F:zinc ion binding"/>
    <property type="evidence" value="ECO:0007669"/>
    <property type="project" value="UniProtKB-KW"/>
</dbReference>
<dbReference type="GO" id="GO:0006357">
    <property type="term" value="P:regulation of transcription by RNA polymerase II"/>
    <property type="evidence" value="ECO:0000318"/>
    <property type="project" value="GO_Central"/>
</dbReference>
<dbReference type="CDD" id="cd07765">
    <property type="entry name" value="KRAB_A-box"/>
    <property type="match status" value="1"/>
</dbReference>
<dbReference type="FunFam" id="3.30.160.60:FF:000838">
    <property type="entry name" value="Zinc finger protein 14"/>
    <property type="match status" value="1"/>
</dbReference>
<dbReference type="FunFam" id="3.30.160.60:FF:000193">
    <property type="entry name" value="Zinc finger protein 300"/>
    <property type="match status" value="2"/>
</dbReference>
<dbReference type="FunFam" id="3.30.160.60:FF:000184">
    <property type="entry name" value="Zinc finger protein 333"/>
    <property type="match status" value="2"/>
</dbReference>
<dbReference type="FunFam" id="3.30.160.60:FF:001498">
    <property type="entry name" value="Zinc finger protein 404"/>
    <property type="match status" value="1"/>
</dbReference>
<dbReference type="FunFam" id="3.30.160.60:FF:001433">
    <property type="entry name" value="Zinc finger protein 44"/>
    <property type="match status" value="1"/>
</dbReference>
<dbReference type="FunFam" id="3.30.160.60:FF:002254">
    <property type="entry name" value="Zinc finger protein 540"/>
    <property type="match status" value="1"/>
</dbReference>
<dbReference type="FunFam" id="3.30.160.60:FF:000156">
    <property type="entry name" value="Zinc finger protein 568"/>
    <property type="match status" value="1"/>
</dbReference>
<dbReference type="FunFam" id="3.30.160.60:FF:001432">
    <property type="entry name" value="Zinc finger protein 571"/>
    <property type="match status" value="1"/>
</dbReference>
<dbReference type="FunFam" id="3.30.160.60:FF:000564">
    <property type="entry name" value="zinc finger protein 699"/>
    <property type="match status" value="2"/>
</dbReference>
<dbReference type="FunFam" id="3.30.160.60:FF:000710">
    <property type="entry name" value="Zinc finger protein 768"/>
    <property type="match status" value="1"/>
</dbReference>
<dbReference type="FunFam" id="3.30.160.60:FF:000493">
    <property type="entry name" value="Zinc finger protein 805"/>
    <property type="match status" value="2"/>
</dbReference>
<dbReference type="FunFam" id="3.30.160.60:FF:001459">
    <property type="entry name" value="Zinc finger protein 823"/>
    <property type="match status" value="1"/>
</dbReference>
<dbReference type="Gene3D" id="6.10.140.140">
    <property type="match status" value="1"/>
</dbReference>
<dbReference type="Gene3D" id="3.30.160.60">
    <property type="entry name" value="Classic Zinc Finger"/>
    <property type="match status" value="16"/>
</dbReference>
<dbReference type="InterPro" id="IPR001909">
    <property type="entry name" value="KRAB"/>
</dbReference>
<dbReference type="InterPro" id="IPR036051">
    <property type="entry name" value="KRAB_dom_sf"/>
</dbReference>
<dbReference type="InterPro" id="IPR036236">
    <property type="entry name" value="Znf_C2H2_sf"/>
</dbReference>
<dbReference type="InterPro" id="IPR013087">
    <property type="entry name" value="Znf_C2H2_type"/>
</dbReference>
<dbReference type="PANTHER" id="PTHR24390">
    <property type="entry name" value="ZINC FINGER PROTEIN"/>
    <property type="match status" value="1"/>
</dbReference>
<dbReference type="PANTHER" id="PTHR24390:SF238">
    <property type="entry name" value="ZINC FINGER PROTEIN 763"/>
    <property type="match status" value="1"/>
</dbReference>
<dbReference type="Pfam" id="PF01352">
    <property type="entry name" value="KRAB"/>
    <property type="match status" value="1"/>
</dbReference>
<dbReference type="Pfam" id="PF00096">
    <property type="entry name" value="zf-C2H2"/>
    <property type="match status" value="9"/>
</dbReference>
<dbReference type="Pfam" id="PF13894">
    <property type="entry name" value="zf-C2H2_4"/>
    <property type="match status" value="1"/>
</dbReference>
<dbReference type="Pfam" id="PF13912">
    <property type="entry name" value="zf-C2H2_6"/>
    <property type="match status" value="2"/>
</dbReference>
<dbReference type="SMART" id="SM00349">
    <property type="entry name" value="KRAB"/>
    <property type="match status" value="1"/>
</dbReference>
<dbReference type="SMART" id="SM00355">
    <property type="entry name" value="ZnF_C2H2"/>
    <property type="match status" value="16"/>
</dbReference>
<dbReference type="SUPFAM" id="SSF57667">
    <property type="entry name" value="beta-beta-alpha zinc fingers"/>
    <property type="match status" value="9"/>
</dbReference>
<dbReference type="SUPFAM" id="SSF109640">
    <property type="entry name" value="KRAB domain (Kruppel-associated box)"/>
    <property type="match status" value="1"/>
</dbReference>
<dbReference type="PROSITE" id="PS50805">
    <property type="entry name" value="KRAB"/>
    <property type="match status" value="1"/>
</dbReference>
<dbReference type="PROSITE" id="PS00028">
    <property type="entry name" value="ZINC_FINGER_C2H2_1"/>
    <property type="match status" value="14"/>
</dbReference>
<dbReference type="PROSITE" id="PS50157">
    <property type="entry name" value="ZINC_FINGER_C2H2_2"/>
    <property type="match status" value="16"/>
</dbReference>
<evidence type="ECO:0000255" key="1">
    <source>
        <dbReference type="PROSITE-ProRule" id="PRU00042"/>
    </source>
</evidence>
<evidence type="ECO:0000255" key="2">
    <source>
        <dbReference type="PROSITE-ProRule" id="PRU00119"/>
    </source>
</evidence>
<evidence type="ECO:0000269" key="3">
    <source>
    </source>
</evidence>
<evidence type="ECO:0000269" key="4">
    <source>
    </source>
</evidence>
<evidence type="ECO:0000303" key="5">
    <source>
    </source>
</evidence>
<evidence type="ECO:0000305" key="6"/>
<reference key="1">
    <citation type="journal article" date="2004" name="Nat. Genet.">
        <title>Complete sequencing and characterization of 21,243 full-length human cDNAs.</title>
        <authorList>
            <person name="Ota T."/>
            <person name="Suzuki Y."/>
            <person name="Nishikawa T."/>
            <person name="Otsuki T."/>
            <person name="Sugiyama T."/>
            <person name="Irie R."/>
            <person name="Wakamatsu A."/>
            <person name="Hayashi K."/>
            <person name="Sato H."/>
            <person name="Nagai K."/>
            <person name="Kimura K."/>
            <person name="Makita H."/>
            <person name="Sekine M."/>
            <person name="Obayashi M."/>
            <person name="Nishi T."/>
            <person name="Shibahara T."/>
            <person name="Tanaka T."/>
            <person name="Ishii S."/>
            <person name="Yamamoto J."/>
            <person name="Saito K."/>
            <person name="Kawai Y."/>
            <person name="Isono Y."/>
            <person name="Nakamura Y."/>
            <person name="Nagahari K."/>
            <person name="Murakami K."/>
            <person name="Yasuda T."/>
            <person name="Iwayanagi T."/>
            <person name="Wagatsuma M."/>
            <person name="Shiratori A."/>
            <person name="Sudo H."/>
            <person name="Hosoiri T."/>
            <person name="Kaku Y."/>
            <person name="Kodaira H."/>
            <person name="Kondo H."/>
            <person name="Sugawara M."/>
            <person name="Takahashi M."/>
            <person name="Kanda K."/>
            <person name="Yokoi T."/>
            <person name="Furuya T."/>
            <person name="Kikkawa E."/>
            <person name="Omura Y."/>
            <person name="Abe K."/>
            <person name="Kamihara K."/>
            <person name="Katsuta N."/>
            <person name="Sato K."/>
            <person name="Tanikawa M."/>
            <person name="Yamazaki M."/>
            <person name="Ninomiya K."/>
            <person name="Ishibashi T."/>
            <person name="Yamashita H."/>
            <person name="Murakawa K."/>
            <person name="Fujimori K."/>
            <person name="Tanai H."/>
            <person name="Kimata M."/>
            <person name="Watanabe M."/>
            <person name="Hiraoka S."/>
            <person name="Chiba Y."/>
            <person name="Ishida S."/>
            <person name="Ono Y."/>
            <person name="Takiguchi S."/>
            <person name="Watanabe S."/>
            <person name="Yosida M."/>
            <person name="Hotuta T."/>
            <person name="Kusano J."/>
            <person name="Kanehori K."/>
            <person name="Takahashi-Fujii A."/>
            <person name="Hara H."/>
            <person name="Tanase T.-O."/>
            <person name="Nomura Y."/>
            <person name="Togiya S."/>
            <person name="Komai F."/>
            <person name="Hara R."/>
            <person name="Takeuchi K."/>
            <person name="Arita M."/>
            <person name="Imose N."/>
            <person name="Musashino K."/>
            <person name="Yuuki H."/>
            <person name="Oshima A."/>
            <person name="Sasaki N."/>
            <person name="Aotsuka S."/>
            <person name="Yoshikawa Y."/>
            <person name="Matsunawa H."/>
            <person name="Ichihara T."/>
            <person name="Shiohata N."/>
            <person name="Sano S."/>
            <person name="Moriya S."/>
            <person name="Momiyama H."/>
            <person name="Satoh N."/>
            <person name="Takami S."/>
            <person name="Terashima Y."/>
            <person name="Suzuki O."/>
            <person name="Nakagawa S."/>
            <person name="Senoh A."/>
            <person name="Mizoguchi H."/>
            <person name="Goto Y."/>
            <person name="Shimizu F."/>
            <person name="Wakebe H."/>
            <person name="Hishigaki H."/>
            <person name="Watanabe T."/>
            <person name="Sugiyama A."/>
            <person name="Takemoto M."/>
            <person name="Kawakami B."/>
            <person name="Yamazaki M."/>
            <person name="Watanabe K."/>
            <person name="Kumagai A."/>
            <person name="Itakura S."/>
            <person name="Fukuzumi Y."/>
            <person name="Fujimori Y."/>
            <person name="Komiyama M."/>
            <person name="Tashiro H."/>
            <person name="Tanigami A."/>
            <person name="Fujiwara T."/>
            <person name="Ono T."/>
            <person name="Yamada K."/>
            <person name="Fujii Y."/>
            <person name="Ozaki K."/>
            <person name="Hirao M."/>
            <person name="Ohmori Y."/>
            <person name="Kawabata A."/>
            <person name="Hikiji T."/>
            <person name="Kobatake N."/>
            <person name="Inagaki H."/>
            <person name="Ikema Y."/>
            <person name="Okamoto S."/>
            <person name="Okitani R."/>
            <person name="Kawakami T."/>
            <person name="Noguchi S."/>
            <person name="Itoh T."/>
            <person name="Shigeta K."/>
            <person name="Senba T."/>
            <person name="Matsumura K."/>
            <person name="Nakajima Y."/>
            <person name="Mizuno T."/>
            <person name="Morinaga M."/>
            <person name="Sasaki M."/>
            <person name="Togashi T."/>
            <person name="Oyama M."/>
            <person name="Hata H."/>
            <person name="Watanabe M."/>
            <person name="Komatsu T."/>
            <person name="Mizushima-Sugano J."/>
            <person name="Satoh T."/>
            <person name="Shirai Y."/>
            <person name="Takahashi Y."/>
            <person name="Nakagawa K."/>
            <person name="Okumura K."/>
            <person name="Nagase T."/>
            <person name="Nomura N."/>
            <person name="Kikuchi H."/>
            <person name="Masuho Y."/>
            <person name="Yamashita R."/>
            <person name="Nakai K."/>
            <person name="Yada T."/>
            <person name="Nakamura Y."/>
            <person name="Ohara O."/>
            <person name="Isogai T."/>
            <person name="Sugano S."/>
        </authorList>
    </citation>
    <scope>NUCLEOTIDE SEQUENCE [LARGE SCALE MRNA] (ISOFORMS 1 AND 2)</scope>
    <source>
        <tissue>Substantia nigra</tissue>
    </source>
</reference>
<reference key="2">
    <citation type="journal article" date="2004" name="Nature">
        <title>The DNA sequence and biology of human chromosome 19.</title>
        <authorList>
            <person name="Grimwood J."/>
            <person name="Gordon L.A."/>
            <person name="Olsen A.S."/>
            <person name="Terry A."/>
            <person name="Schmutz J."/>
            <person name="Lamerdin J.E."/>
            <person name="Hellsten U."/>
            <person name="Goodstein D."/>
            <person name="Couronne O."/>
            <person name="Tran-Gyamfi M."/>
            <person name="Aerts A."/>
            <person name="Altherr M."/>
            <person name="Ashworth L."/>
            <person name="Bajorek E."/>
            <person name="Black S."/>
            <person name="Branscomb E."/>
            <person name="Caenepeel S."/>
            <person name="Carrano A.V."/>
            <person name="Caoile C."/>
            <person name="Chan Y.M."/>
            <person name="Christensen M."/>
            <person name="Cleland C.A."/>
            <person name="Copeland A."/>
            <person name="Dalin E."/>
            <person name="Dehal P."/>
            <person name="Denys M."/>
            <person name="Detter J.C."/>
            <person name="Escobar J."/>
            <person name="Flowers D."/>
            <person name="Fotopulos D."/>
            <person name="Garcia C."/>
            <person name="Georgescu A.M."/>
            <person name="Glavina T."/>
            <person name="Gomez M."/>
            <person name="Gonzales E."/>
            <person name="Groza M."/>
            <person name="Hammon N."/>
            <person name="Hawkins T."/>
            <person name="Haydu L."/>
            <person name="Ho I."/>
            <person name="Huang W."/>
            <person name="Israni S."/>
            <person name="Jett J."/>
            <person name="Kadner K."/>
            <person name="Kimball H."/>
            <person name="Kobayashi A."/>
            <person name="Larionov V."/>
            <person name="Leem S.-H."/>
            <person name="Lopez F."/>
            <person name="Lou Y."/>
            <person name="Lowry S."/>
            <person name="Malfatti S."/>
            <person name="Martinez D."/>
            <person name="McCready P.M."/>
            <person name="Medina C."/>
            <person name="Morgan J."/>
            <person name="Nelson K."/>
            <person name="Nolan M."/>
            <person name="Ovcharenko I."/>
            <person name="Pitluck S."/>
            <person name="Pollard M."/>
            <person name="Popkie A.P."/>
            <person name="Predki P."/>
            <person name="Quan G."/>
            <person name="Ramirez L."/>
            <person name="Rash S."/>
            <person name="Retterer J."/>
            <person name="Rodriguez A."/>
            <person name="Rogers S."/>
            <person name="Salamov A."/>
            <person name="Salazar A."/>
            <person name="She X."/>
            <person name="Smith D."/>
            <person name="Slezak T."/>
            <person name="Solovyev V."/>
            <person name="Thayer N."/>
            <person name="Tice H."/>
            <person name="Tsai M."/>
            <person name="Ustaszewska A."/>
            <person name="Vo N."/>
            <person name="Wagner M."/>
            <person name="Wheeler J."/>
            <person name="Wu K."/>
            <person name="Xie G."/>
            <person name="Yang J."/>
            <person name="Dubchak I."/>
            <person name="Furey T.S."/>
            <person name="DeJong P."/>
            <person name="Dickson M."/>
            <person name="Gordon D."/>
            <person name="Eichler E.E."/>
            <person name="Pennacchio L.A."/>
            <person name="Richardson P."/>
            <person name="Stubbs L."/>
            <person name="Rokhsar D.S."/>
            <person name="Myers R.M."/>
            <person name="Rubin E.M."/>
            <person name="Lucas S.M."/>
        </authorList>
    </citation>
    <scope>NUCLEOTIDE SEQUENCE [LARGE SCALE GENOMIC DNA]</scope>
</reference>
<reference key="3">
    <citation type="journal article" date="2006" name="Science">
        <title>The consensus coding sequences of human breast and colorectal cancers.</title>
        <authorList>
            <person name="Sjoeblom T."/>
            <person name="Jones S."/>
            <person name="Wood L.D."/>
            <person name="Parsons D.W."/>
            <person name="Lin J."/>
            <person name="Barber T.D."/>
            <person name="Mandelker D."/>
            <person name="Leary R.J."/>
            <person name="Ptak J."/>
            <person name="Silliman N."/>
            <person name="Szabo S."/>
            <person name="Buckhaults P."/>
            <person name="Farrell C."/>
            <person name="Meeh P."/>
            <person name="Markowitz S.D."/>
            <person name="Willis J."/>
            <person name="Dawson D."/>
            <person name="Willson J.K.V."/>
            <person name="Gazdar A.F."/>
            <person name="Hartigan J."/>
            <person name="Wu L."/>
            <person name="Liu C."/>
            <person name="Parmigiani G."/>
            <person name="Park B.H."/>
            <person name="Bachman K.E."/>
            <person name="Papadopoulos N."/>
            <person name="Vogelstein B."/>
            <person name="Kinzler K.W."/>
            <person name="Velculescu V.E."/>
        </authorList>
    </citation>
    <scope>VARIANTS [LARGE SCALE ANALYSIS] SER-152 AND SER-243</scope>
</reference>
<reference key="4">
    <citation type="journal article" date="2011" name="Nature">
        <title>Exome sequencing identifies frequent mutation of the SWI/SNF complex gene PBRM1 in renal carcinoma.</title>
        <authorList>
            <person name="Varela I."/>
            <person name="Tarpey P."/>
            <person name="Raine K."/>
            <person name="Huang D."/>
            <person name="Ong C.K."/>
            <person name="Stephens P."/>
            <person name="Davies H."/>
            <person name="Jones D."/>
            <person name="Lin M.L."/>
            <person name="Teague J."/>
            <person name="Bignell G."/>
            <person name="Butler A."/>
            <person name="Cho J."/>
            <person name="Dalgliesh G.L."/>
            <person name="Galappaththige D."/>
            <person name="Greenman C."/>
            <person name="Hardy C."/>
            <person name="Jia M."/>
            <person name="Latimer C."/>
            <person name="Lau K.W."/>
            <person name="Marshall J."/>
            <person name="McLaren S."/>
            <person name="Menzies A."/>
            <person name="Mudie L."/>
            <person name="Stebbings L."/>
            <person name="Largaespada D.A."/>
            <person name="Wessels L.F.A."/>
            <person name="Richard S."/>
            <person name="Kahnoski R.J."/>
            <person name="Anema J."/>
            <person name="Tuveson D.A."/>
            <person name="Perez-Mancera P.A."/>
            <person name="Mustonen V."/>
            <person name="Fischer A."/>
            <person name="Adams D.J."/>
            <person name="Rust A."/>
            <person name="Chan-On W."/>
            <person name="Subimerb C."/>
            <person name="Dykema K."/>
            <person name="Furge K."/>
            <person name="Campbell P.J."/>
            <person name="Teh B.T."/>
            <person name="Stratton M.R."/>
            <person name="Futreal P.A."/>
        </authorList>
    </citation>
    <scope>VARIANT LEU-590</scope>
</reference>
<gene>
    <name type="primary">ZNF442</name>
</gene>
<keyword id="KW-0025">Alternative splicing</keyword>
<keyword id="KW-0238">DNA-binding</keyword>
<keyword id="KW-0479">Metal-binding</keyword>
<keyword id="KW-0539">Nucleus</keyword>
<keyword id="KW-1267">Proteomics identification</keyword>
<keyword id="KW-1185">Reference proteome</keyword>
<keyword id="KW-0677">Repeat</keyword>
<keyword id="KW-0804">Transcription</keyword>
<keyword id="KW-0805">Transcription regulation</keyword>
<keyword id="KW-0862">Zinc</keyword>
<keyword id="KW-0863">Zinc-finger</keyword>
<comment type="function">
    <text>May be involved in transcriptional regulation.</text>
</comment>
<comment type="subcellular location">
    <subcellularLocation>
        <location evidence="6">Nucleus</location>
    </subcellularLocation>
</comment>
<comment type="alternative products">
    <event type="alternative splicing"/>
    <isoform>
        <id>Q9H7R0-1</id>
        <name>1</name>
        <sequence type="displayed"/>
    </isoform>
    <isoform>
        <id>Q9H7R0-2</id>
        <name>2</name>
        <sequence type="described" ref="VSP_055953"/>
    </isoform>
</comment>
<comment type="similarity">
    <text evidence="6">Belongs to the krueppel C2H2-type zinc-finger protein family.</text>
</comment>
<sequence length="627" mass="72863">MIVFGGEDRSDLFLPDSQTNEERKQYDSVAFEDVAVNFTQEEWALLGPSQKSLYRDVMWETIRNLDCIGMKWEDTNIEDQHRNPRRSLRCHIIERFSESRQPDSTVNEKPPGVDPCKSSVCGEIMGCSFLNCYITFDAGHKPDECQEYGEKPHTHKQCGTAFNYHHSFQTQERPHTGKKRYDCKECGKTFSSSGNLRRHIIVQRGGGPYICKLCGKAFFWPSLFRMHERTHTGEKPYECKQCCKAFPIYSSYLRHERTHTGEKPYECKHCSKAFPDYSSYVRHERTHTGEKPYKCKRCGRAFSVSSSLRIHERTHTGEKPYECKQCGKAFHHLGSFQRHMIRHTGDGPHKCKICGKGFDCPSSLQSHERTHTGEKPYECKQCGKALSHHSSFRSHMIMHTGDGPHKCKVCGKAFIYPSVFQGHERTHTGEKPYECKECGKAFRISSSLRRHETTHTGEKPYKCKCGKAFIDFYSFQNHETTHTGEKPYECKECGKAFSCFTYLSQHRRTHMAEKPYECKTCKKAFSHFGNLKVHERIHTGEKPYECKECRKAFSWLTCLLRHERIHTGKKSYECQQCGKAFTRSRFLRGHEKTHTGEKMHECKECGKALSSLSSLHRHKRTHWRDTL</sequence>
<proteinExistence type="evidence at protein level"/>
<name>ZN442_HUMAN</name>
<protein>
    <recommendedName>
        <fullName>Zinc finger protein 442</fullName>
    </recommendedName>
</protein>
<organism>
    <name type="scientific">Homo sapiens</name>
    <name type="common">Human</name>
    <dbReference type="NCBI Taxonomy" id="9606"/>
    <lineage>
        <taxon>Eukaryota</taxon>
        <taxon>Metazoa</taxon>
        <taxon>Chordata</taxon>
        <taxon>Craniata</taxon>
        <taxon>Vertebrata</taxon>
        <taxon>Euteleostomi</taxon>
        <taxon>Mammalia</taxon>
        <taxon>Eutheria</taxon>
        <taxon>Euarchontoglires</taxon>
        <taxon>Primates</taxon>
        <taxon>Haplorrhini</taxon>
        <taxon>Catarrhini</taxon>
        <taxon>Hominidae</taxon>
        <taxon>Homo</taxon>
    </lineage>
</organism>
<accession>Q9H7R0</accession>
<accession>B4DJ48</accession>